<name>PROB_STRA1</name>
<accession>Q3K396</accession>
<sequence length="267" mass="29198">MKRHFETTRRIVIKVGTSSLVQTSGKINLSKIDHLAFVISSLMNRGMEVILVSSGAMGFGLDILKMDKRPQEISQQQAVSSVGQVAMMSLYSQIFSHYQTHVSQILLTRDVVVFPESLQNVTNSFESLLSMGILPIVNENDAVSVDEMDHKTKFGDNDRLSAVVAKITKADLLIMLSDIDGLFDKNPNIYDDAVLRSHVSEITDDIIKSAGGAGSKFGTGGMLSKIKSAQMVFDNNGQMILMNGANPRDILKVLDGHNIGTYFAQGK</sequence>
<keyword id="KW-0028">Amino-acid biosynthesis</keyword>
<keyword id="KW-0067">ATP-binding</keyword>
<keyword id="KW-0963">Cytoplasm</keyword>
<keyword id="KW-0418">Kinase</keyword>
<keyword id="KW-0547">Nucleotide-binding</keyword>
<keyword id="KW-0641">Proline biosynthesis</keyword>
<keyword id="KW-0808">Transferase</keyword>
<organism>
    <name type="scientific">Streptococcus agalactiae serotype Ia (strain ATCC 27591 / A909 / CDC SS700)</name>
    <dbReference type="NCBI Taxonomy" id="205921"/>
    <lineage>
        <taxon>Bacteria</taxon>
        <taxon>Bacillati</taxon>
        <taxon>Bacillota</taxon>
        <taxon>Bacilli</taxon>
        <taxon>Lactobacillales</taxon>
        <taxon>Streptococcaceae</taxon>
        <taxon>Streptococcus</taxon>
    </lineage>
</organism>
<protein>
    <recommendedName>
        <fullName evidence="1">Glutamate 5-kinase</fullName>
        <ecNumber evidence="1">2.7.2.11</ecNumber>
    </recommendedName>
    <alternativeName>
        <fullName evidence="1">Gamma-glutamyl kinase</fullName>
        <shortName evidence="1">GK</shortName>
    </alternativeName>
</protein>
<evidence type="ECO:0000255" key="1">
    <source>
        <dbReference type="HAMAP-Rule" id="MF_00456"/>
    </source>
</evidence>
<dbReference type="EC" id="2.7.2.11" evidence="1"/>
<dbReference type="EMBL" id="CP000114">
    <property type="protein sequence ID" value="ABA45982.1"/>
    <property type="molecule type" value="Genomic_DNA"/>
</dbReference>
<dbReference type="RefSeq" id="WP_000820352.1">
    <property type="nucleotide sequence ID" value="NC_007432.1"/>
</dbReference>
<dbReference type="SMR" id="Q3K396"/>
<dbReference type="KEGG" id="sak:SAK_0355"/>
<dbReference type="HOGENOM" id="CLU_025400_0_2_9"/>
<dbReference type="UniPathway" id="UPA00098">
    <property type="reaction ID" value="UER00359"/>
</dbReference>
<dbReference type="GO" id="GO:0005829">
    <property type="term" value="C:cytosol"/>
    <property type="evidence" value="ECO:0007669"/>
    <property type="project" value="TreeGrafter"/>
</dbReference>
<dbReference type="GO" id="GO:0005524">
    <property type="term" value="F:ATP binding"/>
    <property type="evidence" value="ECO:0007669"/>
    <property type="project" value="UniProtKB-KW"/>
</dbReference>
<dbReference type="GO" id="GO:0004349">
    <property type="term" value="F:glutamate 5-kinase activity"/>
    <property type="evidence" value="ECO:0007669"/>
    <property type="project" value="UniProtKB-UniRule"/>
</dbReference>
<dbReference type="GO" id="GO:0055129">
    <property type="term" value="P:L-proline biosynthetic process"/>
    <property type="evidence" value="ECO:0007669"/>
    <property type="project" value="UniProtKB-UniRule"/>
</dbReference>
<dbReference type="CDD" id="cd04242">
    <property type="entry name" value="AAK_G5K_ProB"/>
    <property type="match status" value="1"/>
</dbReference>
<dbReference type="FunFam" id="3.40.1160.10:FF:000018">
    <property type="entry name" value="Glutamate 5-kinase"/>
    <property type="match status" value="1"/>
</dbReference>
<dbReference type="Gene3D" id="3.40.1160.10">
    <property type="entry name" value="Acetylglutamate kinase-like"/>
    <property type="match status" value="1"/>
</dbReference>
<dbReference type="HAMAP" id="MF_00456">
    <property type="entry name" value="ProB"/>
    <property type="match status" value="1"/>
</dbReference>
<dbReference type="InterPro" id="IPR036393">
    <property type="entry name" value="AceGlu_kinase-like_sf"/>
</dbReference>
<dbReference type="InterPro" id="IPR001048">
    <property type="entry name" value="Asp/Glu/Uridylate_kinase"/>
</dbReference>
<dbReference type="InterPro" id="IPR041739">
    <property type="entry name" value="G5K_ProB"/>
</dbReference>
<dbReference type="InterPro" id="IPR001057">
    <property type="entry name" value="Glu/AcGlu_kinase"/>
</dbReference>
<dbReference type="InterPro" id="IPR011529">
    <property type="entry name" value="Glu_5kinase"/>
</dbReference>
<dbReference type="InterPro" id="IPR005715">
    <property type="entry name" value="Glu_5kinase/COase_Synthase"/>
</dbReference>
<dbReference type="InterPro" id="IPR019797">
    <property type="entry name" value="Glutamate_5-kinase_CS"/>
</dbReference>
<dbReference type="NCBIfam" id="TIGR01027">
    <property type="entry name" value="proB"/>
    <property type="match status" value="1"/>
</dbReference>
<dbReference type="PANTHER" id="PTHR43654">
    <property type="entry name" value="GLUTAMATE 5-KINASE"/>
    <property type="match status" value="1"/>
</dbReference>
<dbReference type="PANTHER" id="PTHR43654:SF1">
    <property type="entry name" value="ISOPENTENYL PHOSPHATE KINASE"/>
    <property type="match status" value="1"/>
</dbReference>
<dbReference type="Pfam" id="PF00696">
    <property type="entry name" value="AA_kinase"/>
    <property type="match status" value="1"/>
</dbReference>
<dbReference type="PIRSF" id="PIRSF000729">
    <property type="entry name" value="GK"/>
    <property type="match status" value="1"/>
</dbReference>
<dbReference type="PRINTS" id="PR00474">
    <property type="entry name" value="GLU5KINASE"/>
</dbReference>
<dbReference type="SUPFAM" id="SSF53633">
    <property type="entry name" value="Carbamate kinase-like"/>
    <property type="match status" value="1"/>
</dbReference>
<dbReference type="PROSITE" id="PS00902">
    <property type="entry name" value="GLUTAMATE_5_KINASE"/>
    <property type="match status" value="1"/>
</dbReference>
<comment type="function">
    <text evidence="1">Catalyzes the transfer of a phosphate group to glutamate to form L-glutamate 5-phosphate.</text>
</comment>
<comment type="catalytic activity">
    <reaction evidence="1">
        <text>L-glutamate + ATP = L-glutamyl 5-phosphate + ADP</text>
        <dbReference type="Rhea" id="RHEA:14877"/>
        <dbReference type="ChEBI" id="CHEBI:29985"/>
        <dbReference type="ChEBI" id="CHEBI:30616"/>
        <dbReference type="ChEBI" id="CHEBI:58274"/>
        <dbReference type="ChEBI" id="CHEBI:456216"/>
        <dbReference type="EC" id="2.7.2.11"/>
    </reaction>
</comment>
<comment type="pathway">
    <text evidence="1">Amino-acid biosynthesis; L-proline biosynthesis; L-glutamate 5-semialdehyde from L-glutamate: step 1/2.</text>
</comment>
<comment type="subcellular location">
    <subcellularLocation>
        <location evidence="1">Cytoplasm</location>
    </subcellularLocation>
</comment>
<comment type="similarity">
    <text evidence="1">Belongs to the glutamate 5-kinase family.</text>
</comment>
<feature type="chain" id="PRO_0000230068" description="Glutamate 5-kinase">
    <location>
        <begin position="1"/>
        <end position="267"/>
    </location>
</feature>
<feature type="binding site" evidence="1">
    <location>
        <position position="14"/>
    </location>
    <ligand>
        <name>ATP</name>
        <dbReference type="ChEBI" id="CHEBI:30616"/>
    </ligand>
</feature>
<feature type="binding site" evidence="1">
    <location>
        <position position="54"/>
    </location>
    <ligand>
        <name>substrate</name>
    </ligand>
</feature>
<feature type="binding site" evidence="1">
    <location>
        <position position="141"/>
    </location>
    <ligand>
        <name>substrate</name>
    </ligand>
</feature>
<feature type="binding site" evidence="1">
    <location>
        <position position="157"/>
    </location>
    <ligand>
        <name>substrate</name>
    </ligand>
</feature>
<feature type="binding site" evidence="1">
    <location>
        <begin position="177"/>
        <end position="178"/>
    </location>
    <ligand>
        <name>ATP</name>
        <dbReference type="ChEBI" id="CHEBI:30616"/>
    </ligand>
</feature>
<feature type="binding site" evidence="1">
    <location>
        <begin position="219"/>
        <end position="225"/>
    </location>
    <ligand>
        <name>ATP</name>
        <dbReference type="ChEBI" id="CHEBI:30616"/>
    </ligand>
</feature>
<gene>
    <name evidence="1" type="primary">proB</name>
    <name type="ordered locus">SAK_0355</name>
</gene>
<proteinExistence type="inferred from homology"/>
<reference key="1">
    <citation type="journal article" date="2005" name="Proc. Natl. Acad. Sci. U.S.A.">
        <title>Genome analysis of multiple pathogenic isolates of Streptococcus agalactiae: implications for the microbial 'pan-genome'.</title>
        <authorList>
            <person name="Tettelin H."/>
            <person name="Masignani V."/>
            <person name="Cieslewicz M.J."/>
            <person name="Donati C."/>
            <person name="Medini D."/>
            <person name="Ward N.L."/>
            <person name="Angiuoli S.V."/>
            <person name="Crabtree J."/>
            <person name="Jones A.L."/>
            <person name="Durkin A.S."/>
            <person name="DeBoy R.T."/>
            <person name="Davidsen T.M."/>
            <person name="Mora M."/>
            <person name="Scarselli M."/>
            <person name="Margarit y Ros I."/>
            <person name="Peterson J.D."/>
            <person name="Hauser C.R."/>
            <person name="Sundaram J.P."/>
            <person name="Nelson W.C."/>
            <person name="Madupu R."/>
            <person name="Brinkac L.M."/>
            <person name="Dodson R.J."/>
            <person name="Rosovitz M.J."/>
            <person name="Sullivan S.A."/>
            <person name="Daugherty S.C."/>
            <person name="Haft D.H."/>
            <person name="Selengut J."/>
            <person name="Gwinn M.L."/>
            <person name="Zhou L."/>
            <person name="Zafar N."/>
            <person name="Khouri H."/>
            <person name="Radune D."/>
            <person name="Dimitrov G."/>
            <person name="Watkins K."/>
            <person name="O'Connor K.J."/>
            <person name="Smith S."/>
            <person name="Utterback T.R."/>
            <person name="White O."/>
            <person name="Rubens C.E."/>
            <person name="Grandi G."/>
            <person name="Madoff L.C."/>
            <person name="Kasper D.L."/>
            <person name="Telford J.L."/>
            <person name="Wessels M.R."/>
            <person name="Rappuoli R."/>
            <person name="Fraser C.M."/>
        </authorList>
    </citation>
    <scope>NUCLEOTIDE SEQUENCE [LARGE SCALE GENOMIC DNA]</scope>
    <source>
        <strain>ATCC 27591 / A909 / CDC SS700</strain>
    </source>
</reference>